<sequence length="229" mass="27094">MAKKKAFTPLFYLSFIVFLPWWISFSFKKCLESWITNWWNTGQSEIFLNDIQEKSILEKFIELEEFVFLDEMIKEYSETHPQEFRIGIHKETIQFIKIQNEGHIHTILHFSTNLICFVILSGYSIWGNENLVILNSWSREFLYNLSDTVKVFSILLLTDLCIGFHSPHGWELMIGSIYQDFGFGYNDQILSGLVSTFPVILDTILKYWIFRYLNRVSPSLVVIYHSMND</sequence>
<protein>
    <recommendedName>
        <fullName evidence="1">Potassium/proton antiporter CemA</fullName>
    </recommendedName>
    <alternativeName>
        <fullName evidence="1">Chloroplast envelope membrane protein A</fullName>
        <shortName evidence="1">CemA</shortName>
    </alternativeName>
</protein>
<organism>
    <name type="scientific">Ipomoea purpurea</name>
    <name type="common">Common morning glory</name>
    <name type="synonym">Pharbitis purpurea</name>
    <dbReference type="NCBI Taxonomy" id="4121"/>
    <lineage>
        <taxon>Eukaryota</taxon>
        <taxon>Viridiplantae</taxon>
        <taxon>Streptophyta</taxon>
        <taxon>Embryophyta</taxon>
        <taxon>Tracheophyta</taxon>
        <taxon>Spermatophyta</taxon>
        <taxon>Magnoliopsida</taxon>
        <taxon>eudicotyledons</taxon>
        <taxon>Gunneridae</taxon>
        <taxon>Pentapetalae</taxon>
        <taxon>asterids</taxon>
        <taxon>lamiids</taxon>
        <taxon>Solanales</taxon>
        <taxon>Convolvulaceae</taxon>
        <taxon>Ipomoeeae</taxon>
        <taxon>Ipomoea</taxon>
    </lineage>
</organism>
<feature type="chain" id="PRO_0000323245" description="Potassium/proton antiporter CemA">
    <location>
        <begin position="1"/>
        <end position="229"/>
    </location>
</feature>
<feature type="transmembrane region" description="Helical" evidence="1">
    <location>
        <begin position="7"/>
        <end position="27"/>
    </location>
</feature>
<feature type="transmembrane region" description="Helical" evidence="1">
    <location>
        <begin position="114"/>
        <end position="134"/>
    </location>
</feature>
<feature type="transmembrane region" description="Helical" evidence="1">
    <location>
        <begin position="189"/>
        <end position="209"/>
    </location>
</feature>
<accession>A7Y3F4</accession>
<name>CEMA_IPOPU</name>
<reference key="1">
    <citation type="journal article" date="2007" name="BMC Plant Biol.">
        <title>Complete plastid genome sequences suggest strong selection for retention of photosynthetic genes in the parasitic plant genus Cuscuta.</title>
        <authorList>
            <person name="McNeal J.R."/>
            <person name="Kuehl J.V."/>
            <person name="Boore J.L."/>
            <person name="dePamphilis C.W."/>
        </authorList>
    </citation>
    <scope>NUCLEOTIDE SEQUENCE [LARGE SCALE GENOMIC DNA]</scope>
</reference>
<keyword id="KW-0050">Antiport</keyword>
<keyword id="KW-0150">Chloroplast</keyword>
<keyword id="KW-0375">Hydrogen ion transport</keyword>
<keyword id="KW-0406">Ion transport</keyword>
<keyword id="KW-0472">Membrane</keyword>
<keyword id="KW-0934">Plastid</keyword>
<keyword id="KW-1001">Plastid inner membrane</keyword>
<keyword id="KW-0630">Potassium</keyword>
<keyword id="KW-0633">Potassium transport</keyword>
<keyword id="KW-0812">Transmembrane</keyword>
<keyword id="KW-1133">Transmembrane helix</keyword>
<keyword id="KW-0813">Transport</keyword>
<dbReference type="EMBL" id="EU118126">
    <property type="protein sequence ID" value="ABV02360.1"/>
    <property type="molecule type" value="Genomic_DNA"/>
</dbReference>
<dbReference type="RefSeq" id="YP_001468320.1">
    <property type="nucleotide sequence ID" value="NC_009808.1"/>
</dbReference>
<dbReference type="GeneID" id="5601280"/>
<dbReference type="GO" id="GO:0009706">
    <property type="term" value="C:chloroplast inner membrane"/>
    <property type="evidence" value="ECO:0007669"/>
    <property type="project" value="UniProtKB-SubCell"/>
</dbReference>
<dbReference type="GO" id="GO:0015297">
    <property type="term" value="F:antiporter activity"/>
    <property type="evidence" value="ECO:0007669"/>
    <property type="project" value="UniProtKB-KW"/>
</dbReference>
<dbReference type="GO" id="GO:0015078">
    <property type="term" value="F:proton transmembrane transporter activity"/>
    <property type="evidence" value="ECO:0007669"/>
    <property type="project" value="UniProtKB-UniRule"/>
</dbReference>
<dbReference type="GO" id="GO:0006813">
    <property type="term" value="P:potassium ion transport"/>
    <property type="evidence" value="ECO:0007669"/>
    <property type="project" value="UniProtKB-UniRule"/>
</dbReference>
<dbReference type="HAMAP" id="MF_01308">
    <property type="entry name" value="CemA_PxcA"/>
    <property type="match status" value="1"/>
</dbReference>
<dbReference type="InterPro" id="IPR004282">
    <property type="entry name" value="CemA"/>
</dbReference>
<dbReference type="PANTHER" id="PTHR33650:SF2">
    <property type="entry name" value="CHLOROPLAST ENVELOPE MEMBRANE PROTEIN"/>
    <property type="match status" value="1"/>
</dbReference>
<dbReference type="PANTHER" id="PTHR33650">
    <property type="entry name" value="CHLOROPLAST ENVELOPE MEMBRANE PROTEIN-RELATED"/>
    <property type="match status" value="1"/>
</dbReference>
<dbReference type="Pfam" id="PF03040">
    <property type="entry name" value="CemA"/>
    <property type="match status" value="1"/>
</dbReference>
<comment type="function">
    <text evidence="1">Contributes to K(+)/H(+) antiport activity by supporting proton efflux to control proton extrusion and homeostasis in chloroplasts in a light-dependent manner to modulate photosynthesis. Prevents excessive induction of non-photochemical quenching (NPQ) under continuous-light conditions. Indirectly promotes efficient inorganic carbon uptake into chloroplasts.</text>
</comment>
<comment type="catalytic activity">
    <reaction evidence="1">
        <text>K(+)(in) + H(+)(out) = K(+)(out) + H(+)(in)</text>
        <dbReference type="Rhea" id="RHEA:29467"/>
        <dbReference type="ChEBI" id="CHEBI:15378"/>
        <dbReference type="ChEBI" id="CHEBI:29103"/>
    </reaction>
</comment>
<comment type="subcellular location">
    <subcellularLocation>
        <location evidence="1">Plastid</location>
        <location evidence="1">Chloroplast inner membrane</location>
        <topology evidence="1">Multi-pass membrane protein</topology>
    </subcellularLocation>
</comment>
<comment type="similarity">
    <text evidence="1 2">Belongs to the CemA family.</text>
</comment>
<geneLocation type="chloroplast"/>
<proteinExistence type="inferred from homology"/>
<evidence type="ECO:0000255" key="1">
    <source>
        <dbReference type="HAMAP-Rule" id="MF_01308"/>
    </source>
</evidence>
<evidence type="ECO:0000305" key="2"/>
<gene>
    <name evidence="1" type="primary">cemA</name>
</gene>